<feature type="chain" id="PRO_0000061314" description="Cytochrome b">
    <location>
        <begin position="1"/>
        <end position="394"/>
    </location>
</feature>
<feature type="transmembrane region" description="Helical" evidence="3">
    <location>
        <begin position="39"/>
        <end position="59"/>
    </location>
</feature>
<feature type="transmembrane region" description="Helical" evidence="3">
    <location>
        <begin position="83"/>
        <end position="105"/>
    </location>
</feature>
<feature type="transmembrane region" description="Helical" evidence="3">
    <location>
        <begin position="120"/>
        <end position="140"/>
    </location>
</feature>
<feature type="transmembrane region" description="Helical" evidence="3">
    <location>
        <begin position="186"/>
        <end position="206"/>
    </location>
</feature>
<feature type="transmembrane region" description="Helical" evidence="3">
    <location>
        <begin position="232"/>
        <end position="252"/>
    </location>
</feature>
<feature type="transmembrane region" description="Helical" evidence="3">
    <location>
        <begin position="296"/>
        <end position="316"/>
    </location>
</feature>
<feature type="transmembrane region" description="Helical" evidence="3">
    <location>
        <begin position="328"/>
        <end position="348"/>
    </location>
</feature>
<feature type="transmembrane region" description="Helical" evidence="3">
    <location>
        <begin position="355"/>
        <end position="374"/>
    </location>
</feature>
<feature type="binding site" description="axial binding residue" evidence="3">
    <location>
        <position position="89"/>
    </location>
    <ligand>
        <name>heme b</name>
        <dbReference type="ChEBI" id="CHEBI:60344"/>
        <label>b562</label>
    </ligand>
    <ligandPart>
        <name>Fe</name>
        <dbReference type="ChEBI" id="CHEBI:18248"/>
    </ligandPart>
</feature>
<feature type="binding site" description="axial binding residue" evidence="3">
    <location>
        <position position="103"/>
    </location>
    <ligand>
        <name>heme b</name>
        <dbReference type="ChEBI" id="CHEBI:60344"/>
        <label>b566</label>
    </ligand>
    <ligandPart>
        <name>Fe</name>
        <dbReference type="ChEBI" id="CHEBI:18248"/>
    </ligandPart>
</feature>
<feature type="binding site" description="axial binding residue" evidence="3">
    <location>
        <position position="191"/>
    </location>
    <ligand>
        <name>heme b</name>
        <dbReference type="ChEBI" id="CHEBI:60344"/>
        <label>b562</label>
    </ligand>
    <ligandPart>
        <name>Fe</name>
        <dbReference type="ChEBI" id="CHEBI:18248"/>
    </ligandPart>
</feature>
<feature type="binding site" description="axial binding residue" evidence="3">
    <location>
        <position position="204"/>
    </location>
    <ligand>
        <name>heme b</name>
        <dbReference type="ChEBI" id="CHEBI:60344"/>
        <label>b566</label>
    </ligand>
    <ligandPart>
        <name>Fe</name>
        <dbReference type="ChEBI" id="CHEBI:18248"/>
    </ligandPart>
</feature>
<feature type="binding site" evidence="2">
    <location>
        <position position="209"/>
    </location>
    <ligand>
        <name>a ubiquinone</name>
        <dbReference type="ChEBI" id="CHEBI:16389"/>
    </ligand>
</feature>
<evidence type="ECO:0000250" key="1"/>
<evidence type="ECO:0000250" key="2">
    <source>
        <dbReference type="UniProtKB" id="P00157"/>
    </source>
</evidence>
<evidence type="ECO:0000250" key="3">
    <source>
        <dbReference type="UniProtKB" id="P00163"/>
    </source>
</evidence>
<evidence type="ECO:0000255" key="4">
    <source>
        <dbReference type="PROSITE-ProRule" id="PRU00967"/>
    </source>
</evidence>
<evidence type="ECO:0000255" key="5">
    <source>
        <dbReference type="PROSITE-ProRule" id="PRU00968"/>
    </source>
</evidence>
<evidence type="ECO:0000269" key="6">
    <source>
    </source>
</evidence>
<evidence type="ECO:0000269" key="7">
    <source>
    </source>
</evidence>
<dbReference type="EMBL" id="X07126">
    <property type="protein sequence ID" value="CAA30135.1"/>
    <property type="status" value="ALT_SEQ"/>
    <property type="molecule type" value="Genomic_DNA"/>
</dbReference>
<dbReference type="EMBL" id="X17030">
    <property type="protein sequence ID" value="CAA34892.1"/>
    <property type="status" value="ALT_SEQ"/>
    <property type="molecule type" value="Genomic_DNA"/>
</dbReference>
<dbReference type="PIR" id="S20141">
    <property type="entry name" value="CBOBE"/>
</dbReference>
<dbReference type="SMR" id="P09843"/>
<dbReference type="GO" id="GO:0005743">
    <property type="term" value="C:mitochondrial inner membrane"/>
    <property type="evidence" value="ECO:0007669"/>
    <property type="project" value="UniProtKB-SubCell"/>
</dbReference>
<dbReference type="GO" id="GO:0045275">
    <property type="term" value="C:respiratory chain complex III"/>
    <property type="evidence" value="ECO:0007669"/>
    <property type="project" value="InterPro"/>
</dbReference>
<dbReference type="GO" id="GO:0046872">
    <property type="term" value="F:metal ion binding"/>
    <property type="evidence" value="ECO:0007669"/>
    <property type="project" value="UniProtKB-KW"/>
</dbReference>
<dbReference type="GO" id="GO:0008121">
    <property type="term" value="F:ubiquinol-cytochrome-c reductase activity"/>
    <property type="evidence" value="ECO:0007669"/>
    <property type="project" value="InterPro"/>
</dbReference>
<dbReference type="GO" id="GO:0006122">
    <property type="term" value="P:mitochondrial electron transport, ubiquinol to cytochrome c"/>
    <property type="evidence" value="ECO:0007669"/>
    <property type="project" value="TreeGrafter"/>
</dbReference>
<dbReference type="CDD" id="cd00290">
    <property type="entry name" value="cytochrome_b_C"/>
    <property type="match status" value="1"/>
</dbReference>
<dbReference type="CDD" id="cd00284">
    <property type="entry name" value="Cytochrome_b_N"/>
    <property type="match status" value="1"/>
</dbReference>
<dbReference type="FunFam" id="1.20.810.10:FF:000006">
    <property type="entry name" value="Cytochrome b"/>
    <property type="match status" value="1"/>
</dbReference>
<dbReference type="Gene3D" id="1.20.810.10">
    <property type="entry name" value="Cytochrome Bc1 Complex, Chain C"/>
    <property type="match status" value="1"/>
</dbReference>
<dbReference type="InterPro" id="IPR005798">
    <property type="entry name" value="Cyt_b/b6_C"/>
</dbReference>
<dbReference type="InterPro" id="IPR036150">
    <property type="entry name" value="Cyt_b/b6_C_sf"/>
</dbReference>
<dbReference type="InterPro" id="IPR005797">
    <property type="entry name" value="Cyt_b/b6_N"/>
</dbReference>
<dbReference type="InterPro" id="IPR027387">
    <property type="entry name" value="Cytb/b6-like_sf"/>
</dbReference>
<dbReference type="InterPro" id="IPR030689">
    <property type="entry name" value="Cytochrome_b"/>
</dbReference>
<dbReference type="InterPro" id="IPR048260">
    <property type="entry name" value="Cytochrome_b_C_euk/bac"/>
</dbReference>
<dbReference type="InterPro" id="IPR048259">
    <property type="entry name" value="Cytochrome_b_N_euk/bac"/>
</dbReference>
<dbReference type="InterPro" id="IPR016174">
    <property type="entry name" value="Di-haem_cyt_TM"/>
</dbReference>
<dbReference type="PANTHER" id="PTHR19271">
    <property type="entry name" value="CYTOCHROME B"/>
    <property type="match status" value="1"/>
</dbReference>
<dbReference type="PANTHER" id="PTHR19271:SF16">
    <property type="entry name" value="CYTOCHROME B"/>
    <property type="match status" value="1"/>
</dbReference>
<dbReference type="Pfam" id="PF00032">
    <property type="entry name" value="Cytochrom_B_C"/>
    <property type="match status" value="1"/>
</dbReference>
<dbReference type="Pfam" id="PF00033">
    <property type="entry name" value="Cytochrome_B"/>
    <property type="match status" value="1"/>
</dbReference>
<dbReference type="PIRSF" id="PIRSF038885">
    <property type="entry name" value="COB"/>
    <property type="match status" value="1"/>
</dbReference>
<dbReference type="SUPFAM" id="SSF81648">
    <property type="entry name" value="a domain/subunit of cytochrome bc1 complex (Ubiquinol-cytochrome c reductase)"/>
    <property type="match status" value="1"/>
</dbReference>
<dbReference type="SUPFAM" id="SSF81342">
    <property type="entry name" value="Transmembrane di-heme cytochromes"/>
    <property type="match status" value="1"/>
</dbReference>
<dbReference type="PROSITE" id="PS51003">
    <property type="entry name" value="CYTB_CTER"/>
    <property type="match status" value="1"/>
</dbReference>
<dbReference type="PROSITE" id="PS51002">
    <property type="entry name" value="CYTB_NTER"/>
    <property type="match status" value="1"/>
</dbReference>
<gene>
    <name type="primary">MT-CYB</name>
    <name type="synonym">COB</name>
    <name type="synonym">CYTB</name>
    <name type="synonym">MTCYB</name>
</gene>
<keyword id="KW-0249">Electron transport</keyword>
<keyword id="KW-0349">Heme</keyword>
<keyword id="KW-0408">Iron</keyword>
<keyword id="KW-0472">Membrane</keyword>
<keyword id="KW-0479">Metal-binding</keyword>
<keyword id="KW-0496">Mitochondrion</keyword>
<keyword id="KW-0999">Mitochondrion inner membrane</keyword>
<keyword id="KW-0679">Respiratory chain</keyword>
<keyword id="KW-0691">RNA editing</keyword>
<keyword id="KW-0812">Transmembrane</keyword>
<keyword id="KW-1133">Transmembrane helix</keyword>
<keyword id="KW-0813">Transport</keyword>
<keyword id="KW-0830">Ubiquinone</keyword>
<reference key="1">
    <citation type="journal article" date="1985" name="Curr. Genet.">
        <title>TGA-Termination codon in the apocytochrome b gene from Oenothera mitochondria.</title>
        <authorList>
            <person name="Schuster W."/>
            <person name="Brennicke A."/>
        </authorList>
    </citation>
    <scope>NUCLEOTIDE SEQUENCE [GENOMIC DNA]</scope>
</reference>
<reference key="2">
    <citation type="journal article" date="1990" name="Nucleic Acids Res.">
        <title>Ribosomal protein S14 transcripts are edited in Oenothera mitochondria.</title>
        <authorList>
            <person name="Schuster W."/>
            <person name="Unseld M."/>
            <person name="Wissinger B."/>
            <person name="Brennicke A."/>
        </authorList>
    </citation>
    <scope>NUCLEOTIDE SEQUENCE [GENOMIC DNA] OF 1-21</scope>
    <scope>RNA EDITING</scope>
</reference>
<reference key="3">
    <citation type="journal article" date="1991" name="Curr. Genet.">
        <title>Distribution of RNA editing sites in Oenothera mitochondrial mRNAs and rRNAs.</title>
        <authorList>
            <person name="Schuster W."/>
            <person name="Ternes R."/>
            <person name="Knoop V."/>
            <person name="Hiesel R."/>
            <person name="Wissinger B."/>
            <person name="Brennicke A."/>
        </authorList>
    </citation>
    <scope>RNA EDITING</scope>
</reference>
<geneLocation type="mitochondrion"/>
<comment type="function">
    <text evidence="3">Component of the ubiquinol-cytochrome c reductase complex (complex III or cytochrome b-c1 complex) that is part of the mitochondrial respiratory chain. The b-c1 complex mediates electron transfer from ubiquinol to cytochrome c. Contributes to the generation of a proton gradient across the mitochondrial membrane that is then used for ATP synthesis.</text>
</comment>
<comment type="cofactor">
    <cofactor evidence="3">
        <name>heme b</name>
        <dbReference type="ChEBI" id="CHEBI:60344"/>
    </cofactor>
    <text evidence="3">Binds 2 heme b groups non-covalently.</text>
</comment>
<comment type="subunit">
    <text evidence="1">The main subunits of complex b-c1 are: cytochrome b, cytochrome c1 and the Rieske protein.</text>
</comment>
<comment type="subcellular location">
    <subcellularLocation>
        <location evidence="3">Mitochondrion inner membrane</location>
        <topology evidence="3">Multi-pass membrane protein</topology>
    </subcellularLocation>
</comment>
<comment type="RNA editing">
    <location>
        <position position="19" evidence="6 7"/>
    </location>
    <location>
        <position position="97" evidence="6 7"/>
    </location>
    <location>
        <position position="101" evidence="6 7"/>
    </location>
    <location>
        <position position="104" evidence="6 7"/>
    </location>
    <location>
        <position position="110" evidence="6 7"/>
    </location>
    <location>
        <position position="121" evidence="6 7"/>
    </location>
    <location>
        <position position="137" evidence="6 7"/>
    </location>
    <location>
        <position position="190" evidence="6 7"/>
    </location>
    <location>
        <position position="286" evidence="6 7"/>
    </location>
    <location>
        <position position="304" evidence="6 7"/>
    </location>
    <location>
        <position position="329" evidence="6 7"/>
    </location>
    <location>
        <position position="363" evidence="6 7"/>
    </location>
</comment>
<comment type="miscellaneous">
    <text evidence="1">Heme 1 (or BL or b562) is low-potential and absorbs at about 562 nm, and heme 2 (or BH or b566) is high-potential and absorbs at about 566 nm.</text>
</comment>
<comment type="similarity">
    <text evidence="4 5">Belongs to the cytochrome b family.</text>
</comment>
<comment type="caution">
    <text evidence="3">The protein contains only eight transmembrane helices, not nine as predicted by bioinformatics tools.</text>
</comment>
<name>CYB_OENBE</name>
<accession>P09843</accession>
<proteinExistence type="evidence at transcript level"/>
<sequence>MATIRNQRFSLLKQPISSILNQHLIDYPTPSNLSYWWGFGSLAGICLVIQIVTGVFLAMHYTPHVDLAFNSVEHIMRDVEGGWLLRYMHANGASMFFIVVYLHTFRGLYYASYSSPREFVWCLGVVIFLLMIVTAFIGYVLPWGQMSFWGATVITSLASAIPVVGDTIVTWLWGGFSVDNATLNRFFSLYHLLPFILVGASLLHLAALHQYGSSNPLGVHSEMDKISFYPYFYVKDLVGWVAFAIFFSIWIFYAPNVLGHPDNYIPANPMSTPPHIVPEWYFLPIYAILRSIPDKAGGVAAIALVFICLLALPFFKDMYVRSSSFRPIYQGIFWLLLADCLLLGWIGCQPVEAPFVTIGQISSIVFFLFFAITPILGRVGRGIPNSYTDETDHT</sequence>
<protein>
    <recommendedName>
        <fullName>Cytochrome b</fullName>
    </recommendedName>
    <alternativeName>
        <fullName>Complex III subunit 3</fullName>
    </alternativeName>
    <alternativeName>
        <fullName>Complex III subunit III</fullName>
    </alternativeName>
    <alternativeName>
        <fullName>Cytochrome b-c1 complex subunit 3</fullName>
    </alternativeName>
    <alternativeName>
        <fullName>Ubiquinol-cytochrome-c reductase complex cytochrome b subunit</fullName>
    </alternativeName>
</protein>
<organism>
    <name type="scientific">Oenothera berteroana</name>
    <name type="common">Bertero's evening primrose</name>
    <dbReference type="NCBI Taxonomy" id="3950"/>
    <lineage>
        <taxon>Eukaryota</taxon>
        <taxon>Viridiplantae</taxon>
        <taxon>Streptophyta</taxon>
        <taxon>Embryophyta</taxon>
        <taxon>Tracheophyta</taxon>
        <taxon>Spermatophyta</taxon>
        <taxon>Magnoliopsida</taxon>
        <taxon>eudicotyledons</taxon>
        <taxon>Gunneridae</taxon>
        <taxon>Pentapetalae</taxon>
        <taxon>rosids</taxon>
        <taxon>malvids</taxon>
        <taxon>Myrtales</taxon>
        <taxon>Onagraceae</taxon>
        <taxon>Onagroideae</taxon>
        <taxon>Onagreae</taxon>
        <taxon>Oenothera</taxon>
    </lineage>
</organism>